<keyword id="KW-0067">ATP-binding</keyword>
<keyword id="KW-0963">Cytoplasm</keyword>
<keyword id="KW-0418">Kinase</keyword>
<keyword id="KW-0460">Magnesium</keyword>
<keyword id="KW-0479">Metal-binding</keyword>
<keyword id="KW-0546">Nucleotide metabolism</keyword>
<keyword id="KW-0547">Nucleotide-binding</keyword>
<keyword id="KW-0597">Phosphoprotein</keyword>
<keyword id="KW-1185">Reference proteome</keyword>
<keyword id="KW-0808">Transferase</keyword>
<accession>B9L159</accession>
<dbReference type="EC" id="2.7.4.6" evidence="1"/>
<dbReference type="EMBL" id="CP001275">
    <property type="protein sequence ID" value="ACM05134.1"/>
    <property type="molecule type" value="Genomic_DNA"/>
</dbReference>
<dbReference type="RefSeq" id="WP_015922712.1">
    <property type="nucleotide sequence ID" value="NC_011959.1"/>
</dbReference>
<dbReference type="SMR" id="B9L159"/>
<dbReference type="STRING" id="309801.trd_1770"/>
<dbReference type="KEGG" id="tro:trd_1770"/>
<dbReference type="eggNOG" id="COG0105">
    <property type="taxonomic scope" value="Bacteria"/>
</dbReference>
<dbReference type="HOGENOM" id="CLU_060216_6_3_0"/>
<dbReference type="OrthoDB" id="9801161at2"/>
<dbReference type="Proteomes" id="UP000000447">
    <property type="component" value="Chromosome"/>
</dbReference>
<dbReference type="GO" id="GO:0005737">
    <property type="term" value="C:cytoplasm"/>
    <property type="evidence" value="ECO:0007669"/>
    <property type="project" value="UniProtKB-SubCell"/>
</dbReference>
<dbReference type="GO" id="GO:0005524">
    <property type="term" value="F:ATP binding"/>
    <property type="evidence" value="ECO:0007669"/>
    <property type="project" value="UniProtKB-UniRule"/>
</dbReference>
<dbReference type="GO" id="GO:0046872">
    <property type="term" value="F:metal ion binding"/>
    <property type="evidence" value="ECO:0007669"/>
    <property type="project" value="UniProtKB-KW"/>
</dbReference>
<dbReference type="GO" id="GO:0004550">
    <property type="term" value="F:nucleoside diphosphate kinase activity"/>
    <property type="evidence" value="ECO:0007669"/>
    <property type="project" value="UniProtKB-UniRule"/>
</dbReference>
<dbReference type="GO" id="GO:0006241">
    <property type="term" value="P:CTP biosynthetic process"/>
    <property type="evidence" value="ECO:0007669"/>
    <property type="project" value="UniProtKB-UniRule"/>
</dbReference>
<dbReference type="GO" id="GO:0006183">
    <property type="term" value="P:GTP biosynthetic process"/>
    <property type="evidence" value="ECO:0007669"/>
    <property type="project" value="UniProtKB-UniRule"/>
</dbReference>
<dbReference type="GO" id="GO:0006228">
    <property type="term" value="P:UTP biosynthetic process"/>
    <property type="evidence" value="ECO:0007669"/>
    <property type="project" value="UniProtKB-UniRule"/>
</dbReference>
<dbReference type="CDD" id="cd04413">
    <property type="entry name" value="NDPk_I"/>
    <property type="match status" value="1"/>
</dbReference>
<dbReference type="FunFam" id="3.30.70.141:FF:000003">
    <property type="entry name" value="Nucleoside diphosphate kinase"/>
    <property type="match status" value="1"/>
</dbReference>
<dbReference type="Gene3D" id="3.30.70.141">
    <property type="entry name" value="Nucleoside diphosphate kinase-like domain"/>
    <property type="match status" value="1"/>
</dbReference>
<dbReference type="HAMAP" id="MF_00451">
    <property type="entry name" value="NDP_kinase"/>
    <property type="match status" value="1"/>
</dbReference>
<dbReference type="InterPro" id="IPR034907">
    <property type="entry name" value="NDK-like_dom"/>
</dbReference>
<dbReference type="InterPro" id="IPR036850">
    <property type="entry name" value="NDK-like_dom_sf"/>
</dbReference>
<dbReference type="InterPro" id="IPR001564">
    <property type="entry name" value="Nucleoside_diP_kinase"/>
</dbReference>
<dbReference type="InterPro" id="IPR023005">
    <property type="entry name" value="Nucleoside_diP_kinase_AS"/>
</dbReference>
<dbReference type="NCBIfam" id="NF001908">
    <property type="entry name" value="PRK00668.1"/>
    <property type="match status" value="1"/>
</dbReference>
<dbReference type="PANTHER" id="PTHR11349">
    <property type="entry name" value="NUCLEOSIDE DIPHOSPHATE KINASE"/>
    <property type="match status" value="1"/>
</dbReference>
<dbReference type="Pfam" id="PF00334">
    <property type="entry name" value="NDK"/>
    <property type="match status" value="1"/>
</dbReference>
<dbReference type="PRINTS" id="PR01243">
    <property type="entry name" value="NUCDPKINASE"/>
</dbReference>
<dbReference type="SMART" id="SM00562">
    <property type="entry name" value="NDK"/>
    <property type="match status" value="1"/>
</dbReference>
<dbReference type="SUPFAM" id="SSF54919">
    <property type="entry name" value="Nucleoside diphosphate kinase, NDK"/>
    <property type="match status" value="1"/>
</dbReference>
<dbReference type="PROSITE" id="PS00469">
    <property type="entry name" value="NDPK"/>
    <property type="match status" value="1"/>
</dbReference>
<dbReference type="PROSITE" id="PS51374">
    <property type="entry name" value="NDPK_LIKE"/>
    <property type="match status" value="1"/>
</dbReference>
<comment type="function">
    <text evidence="1">Major role in the synthesis of nucleoside triphosphates other than ATP. The ATP gamma phosphate is transferred to the NDP beta phosphate via a ping-pong mechanism, using a phosphorylated active-site intermediate.</text>
</comment>
<comment type="catalytic activity">
    <reaction evidence="1">
        <text>a 2'-deoxyribonucleoside 5'-diphosphate + ATP = a 2'-deoxyribonucleoside 5'-triphosphate + ADP</text>
        <dbReference type="Rhea" id="RHEA:44640"/>
        <dbReference type="ChEBI" id="CHEBI:30616"/>
        <dbReference type="ChEBI" id="CHEBI:61560"/>
        <dbReference type="ChEBI" id="CHEBI:73316"/>
        <dbReference type="ChEBI" id="CHEBI:456216"/>
        <dbReference type="EC" id="2.7.4.6"/>
    </reaction>
</comment>
<comment type="catalytic activity">
    <reaction evidence="1">
        <text>a ribonucleoside 5'-diphosphate + ATP = a ribonucleoside 5'-triphosphate + ADP</text>
        <dbReference type="Rhea" id="RHEA:18113"/>
        <dbReference type="ChEBI" id="CHEBI:30616"/>
        <dbReference type="ChEBI" id="CHEBI:57930"/>
        <dbReference type="ChEBI" id="CHEBI:61557"/>
        <dbReference type="ChEBI" id="CHEBI:456216"/>
        <dbReference type="EC" id="2.7.4.6"/>
    </reaction>
</comment>
<comment type="cofactor">
    <cofactor evidence="1">
        <name>Mg(2+)</name>
        <dbReference type="ChEBI" id="CHEBI:18420"/>
    </cofactor>
</comment>
<comment type="subunit">
    <text evidence="1">Homotetramer.</text>
</comment>
<comment type="subcellular location">
    <subcellularLocation>
        <location evidence="1">Cytoplasm</location>
    </subcellularLocation>
</comment>
<comment type="similarity">
    <text evidence="1">Belongs to the NDK family.</text>
</comment>
<protein>
    <recommendedName>
        <fullName evidence="1">Nucleoside diphosphate kinase</fullName>
        <shortName evidence="1">NDK</shortName>
        <shortName evidence="1">NDP kinase</shortName>
        <ecNumber evidence="1">2.7.4.6</ecNumber>
    </recommendedName>
    <alternativeName>
        <fullName evidence="1">Nucleoside-2-P kinase</fullName>
    </alternativeName>
</protein>
<feature type="chain" id="PRO_1000192298" description="Nucleoside diphosphate kinase">
    <location>
        <begin position="1"/>
        <end position="149"/>
    </location>
</feature>
<feature type="active site" description="Pros-phosphohistidine intermediate" evidence="1">
    <location>
        <position position="115"/>
    </location>
</feature>
<feature type="binding site" evidence="1">
    <location>
        <position position="9"/>
    </location>
    <ligand>
        <name>ATP</name>
        <dbReference type="ChEBI" id="CHEBI:30616"/>
    </ligand>
</feature>
<feature type="binding site" evidence="1">
    <location>
        <position position="57"/>
    </location>
    <ligand>
        <name>ATP</name>
        <dbReference type="ChEBI" id="CHEBI:30616"/>
    </ligand>
</feature>
<feature type="binding site" evidence="1">
    <location>
        <position position="85"/>
    </location>
    <ligand>
        <name>ATP</name>
        <dbReference type="ChEBI" id="CHEBI:30616"/>
    </ligand>
</feature>
<feature type="binding site" evidence="1">
    <location>
        <position position="91"/>
    </location>
    <ligand>
        <name>ATP</name>
        <dbReference type="ChEBI" id="CHEBI:30616"/>
    </ligand>
</feature>
<feature type="binding site" evidence="1">
    <location>
        <position position="102"/>
    </location>
    <ligand>
        <name>ATP</name>
        <dbReference type="ChEBI" id="CHEBI:30616"/>
    </ligand>
</feature>
<feature type="binding site" evidence="1">
    <location>
        <position position="112"/>
    </location>
    <ligand>
        <name>ATP</name>
        <dbReference type="ChEBI" id="CHEBI:30616"/>
    </ligand>
</feature>
<sequence length="149" mass="16746">MERTLIIVKPDAVQRGLVGEVLRRLEQRGLRFVGLKLMKVDREVAERHYAEHRGKPFYEDLLAFITSGPVVVGVVEGPRAIEITRKTMGKTDPAQAEPGTIRGDLALTIGQNVIHGSDSPEKASYEIGLFFREDELVSYERAIDRWIMG</sequence>
<proteinExistence type="inferred from homology"/>
<evidence type="ECO:0000255" key="1">
    <source>
        <dbReference type="HAMAP-Rule" id="MF_00451"/>
    </source>
</evidence>
<name>NDK_THERP</name>
<reference key="1">
    <citation type="journal article" date="2009" name="PLoS ONE">
        <title>Complete genome sequence of the aerobic CO-oxidizing thermophile Thermomicrobium roseum.</title>
        <authorList>
            <person name="Wu D."/>
            <person name="Raymond J."/>
            <person name="Wu M."/>
            <person name="Chatterji S."/>
            <person name="Ren Q."/>
            <person name="Graham J.E."/>
            <person name="Bryant D.A."/>
            <person name="Robb F."/>
            <person name="Colman A."/>
            <person name="Tallon L.J."/>
            <person name="Badger J.H."/>
            <person name="Madupu R."/>
            <person name="Ward N.L."/>
            <person name="Eisen J.A."/>
        </authorList>
    </citation>
    <scope>NUCLEOTIDE SEQUENCE [LARGE SCALE GENOMIC DNA]</scope>
    <source>
        <strain>ATCC 27502 / DSM 5159 / P-2</strain>
    </source>
</reference>
<organism>
    <name type="scientific">Thermomicrobium roseum (strain ATCC 27502 / DSM 5159 / P-2)</name>
    <dbReference type="NCBI Taxonomy" id="309801"/>
    <lineage>
        <taxon>Bacteria</taxon>
        <taxon>Pseudomonadati</taxon>
        <taxon>Thermomicrobiota</taxon>
        <taxon>Thermomicrobia</taxon>
        <taxon>Thermomicrobiales</taxon>
        <taxon>Thermomicrobiaceae</taxon>
        <taxon>Thermomicrobium</taxon>
    </lineage>
</organism>
<gene>
    <name evidence="1" type="primary">ndk</name>
    <name type="ordered locus">trd_1770</name>
</gene>